<evidence type="ECO:0000250" key="1"/>
<evidence type="ECO:0000256" key="2">
    <source>
        <dbReference type="SAM" id="MobiDB-lite"/>
    </source>
</evidence>
<evidence type="ECO:0000269" key="3">
    <source>
    </source>
</evidence>
<evidence type="ECO:0000305" key="4"/>
<evidence type="ECO:0000305" key="5">
    <source>
    </source>
</evidence>
<name>ICTL_PIG</name>
<reference key="1">
    <citation type="journal article" date="1989" name="FEBS Lett.">
        <title>Primary structure of a new cysteine proteinase inhibitor from pig leucocytes.</title>
        <authorList>
            <person name="Ritonja A."/>
            <person name="Kopitar M."/>
            <person name="Jerala R."/>
            <person name="Turk V."/>
        </authorList>
    </citation>
    <scope>PROTEIN SEQUENCE</scope>
    <scope>PYROGLUTAMATE FORMATION AT GLN-1</scope>
    <source>
        <tissue>Leukocyte</tissue>
    </source>
</reference>
<reference key="2">
    <citation type="journal article" date="1993" name="FEBS Lett.">
        <title>Pig leukocyte cysteine proteinase inhibitor (PLCPI), a new member of the stefin family.</title>
        <authorList>
            <person name="Lenarcic B."/>
            <person name="Ritonja A."/>
            <person name="Dolenc I."/>
            <person name="Stoka V."/>
            <person name="Berbic S."/>
            <person name="Pungercar J."/>
            <person name="Strukelj B."/>
            <person name="Turk V."/>
        </authorList>
    </citation>
    <scope>REVISION OF FUNCTION</scope>
    <scope>PARTIAL PROTEIN SEQUENCE</scope>
    <source>
        <tissue>Leukocyte</tissue>
    </source>
</reference>
<keyword id="KW-0044">Antibiotic</keyword>
<keyword id="KW-0929">Antimicrobial</keyword>
<keyword id="KW-0903">Direct protein sequencing</keyword>
<keyword id="KW-1015">Disulfide bond</keyword>
<keyword id="KW-0873">Pyrrolidone carboxylic acid</keyword>
<keyword id="KW-1185">Reference proteome</keyword>
<keyword id="KW-0964">Secreted</keyword>
<sequence length="96" mass="10850">QLRYREAVLRAVDRLNEQSSEANLYRLLELDQPPKADEDPGTPKPVSFTVKETVCPRPTRQPPELCDFKEKQCVGTVTLNPSIHSLDISCNEIQSV</sequence>
<accession>P15175</accession>
<proteinExistence type="evidence at protein level"/>
<organism>
    <name type="scientific">Sus scrofa</name>
    <name type="common">Pig</name>
    <dbReference type="NCBI Taxonomy" id="9823"/>
    <lineage>
        <taxon>Eukaryota</taxon>
        <taxon>Metazoa</taxon>
        <taxon>Chordata</taxon>
        <taxon>Craniata</taxon>
        <taxon>Vertebrata</taxon>
        <taxon>Euteleostomi</taxon>
        <taxon>Mammalia</taxon>
        <taxon>Eutheria</taxon>
        <taxon>Laurasiatheria</taxon>
        <taxon>Artiodactyla</taxon>
        <taxon>Suina</taxon>
        <taxon>Suidae</taxon>
        <taxon>Sus</taxon>
    </lineage>
</organism>
<protein>
    <recommendedName>
        <fullName>Cathelin</fullName>
    </recommendedName>
</protein>
<feature type="chain" id="PRO_0000148293" description="Cathelin">
    <location>
        <begin position="1"/>
        <end position="96"/>
    </location>
</feature>
<feature type="region of interest" description="Disordered" evidence="2">
    <location>
        <begin position="31"/>
        <end position="50"/>
    </location>
</feature>
<feature type="modified residue" description="Pyrrolidone carboxylic acid" evidence="3">
    <location>
        <position position="1"/>
    </location>
</feature>
<feature type="disulfide bond" evidence="1">
    <location>
        <begin position="55"/>
        <end position="66"/>
    </location>
</feature>
<feature type="disulfide bond" evidence="1">
    <location>
        <begin position="73"/>
        <end position="90"/>
    </location>
</feature>
<dbReference type="PIR" id="S05660">
    <property type="entry name" value="XKPGC"/>
</dbReference>
<dbReference type="SMR" id="P15175"/>
<dbReference type="FunCoup" id="P15175">
    <property type="interactions" value="19"/>
</dbReference>
<dbReference type="TCDB" id="1.C.33.1.4">
    <property type="family name" value="the cathelicidin (cathelicidin) family"/>
</dbReference>
<dbReference type="PeptideAtlas" id="P15175"/>
<dbReference type="InParanoid" id="P15175"/>
<dbReference type="Proteomes" id="UP000008227">
    <property type="component" value="Unplaced"/>
</dbReference>
<dbReference type="Proteomes" id="UP000314985">
    <property type="component" value="Unplaced"/>
</dbReference>
<dbReference type="Proteomes" id="UP000694570">
    <property type="component" value="Unplaced"/>
</dbReference>
<dbReference type="Proteomes" id="UP000694571">
    <property type="component" value="Unplaced"/>
</dbReference>
<dbReference type="Proteomes" id="UP000694720">
    <property type="component" value="Unplaced"/>
</dbReference>
<dbReference type="Proteomes" id="UP000694722">
    <property type="component" value="Unplaced"/>
</dbReference>
<dbReference type="Proteomes" id="UP000694723">
    <property type="component" value="Unplaced"/>
</dbReference>
<dbReference type="Proteomes" id="UP000694724">
    <property type="component" value="Unplaced"/>
</dbReference>
<dbReference type="Proteomes" id="UP000694725">
    <property type="component" value="Unplaced"/>
</dbReference>
<dbReference type="Proteomes" id="UP000694726">
    <property type="component" value="Unplaced"/>
</dbReference>
<dbReference type="Proteomes" id="UP000694727">
    <property type="component" value="Unplaced"/>
</dbReference>
<dbReference type="Proteomes" id="UP000694728">
    <property type="component" value="Unplaced"/>
</dbReference>
<dbReference type="GO" id="GO:0005615">
    <property type="term" value="C:extracellular space"/>
    <property type="evidence" value="ECO:0000318"/>
    <property type="project" value="GO_Central"/>
</dbReference>
<dbReference type="GO" id="GO:0001530">
    <property type="term" value="F:lipopolysaccharide binding"/>
    <property type="evidence" value="ECO:0000318"/>
    <property type="project" value="GO_Central"/>
</dbReference>
<dbReference type="GO" id="GO:0061844">
    <property type="term" value="P:antimicrobial humoral immune response mediated by antimicrobial peptide"/>
    <property type="evidence" value="ECO:0000318"/>
    <property type="project" value="GO_Central"/>
</dbReference>
<dbReference type="GO" id="GO:0050829">
    <property type="term" value="P:defense response to Gram-negative bacterium"/>
    <property type="evidence" value="ECO:0000318"/>
    <property type="project" value="GO_Central"/>
</dbReference>
<dbReference type="GO" id="GO:0050830">
    <property type="term" value="P:defense response to Gram-positive bacterium"/>
    <property type="evidence" value="ECO:0000318"/>
    <property type="project" value="GO_Central"/>
</dbReference>
<dbReference type="GO" id="GO:0045087">
    <property type="term" value="P:innate immune response"/>
    <property type="evidence" value="ECO:0000318"/>
    <property type="project" value="GO_Central"/>
</dbReference>
<dbReference type="FunFam" id="3.10.450.10:FF:000003">
    <property type="entry name" value="Cathelicidin antimicrobial peptide"/>
    <property type="match status" value="1"/>
</dbReference>
<dbReference type="Gene3D" id="3.10.450.10">
    <property type="match status" value="1"/>
</dbReference>
<dbReference type="InterPro" id="IPR001894">
    <property type="entry name" value="Cathelicidin-like"/>
</dbReference>
<dbReference type="InterPro" id="IPR018216">
    <property type="entry name" value="Cathelicidin_CS"/>
</dbReference>
<dbReference type="InterPro" id="IPR046350">
    <property type="entry name" value="Cystatin_sf"/>
</dbReference>
<dbReference type="PANTHER" id="PTHR10206">
    <property type="entry name" value="CATHELICIDIN"/>
    <property type="match status" value="1"/>
</dbReference>
<dbReference type="PANTHER" id="PTHR10206:SF2">
    <property type="entry name" value="CATHELICIDIN ANTIMICROBIAL PEPTIDE"/>
    <property type="match status" value="1"/>
</dbReference>
<dbReference type="Pfam" id="PF00666">
    <property type="entry name" value="Cathelicidins"/>
    <property type="match status" value="1"/>
</dbReference>
<dbReference type="SUPFAM" id="SSF54403">
    <property type="entry name" value="Cystatin/monellin"/>
    <property type="match status" value="1"/>
</dbReference>
<dbReference type="PROSITE" id="PS00946">
    <property type="entry name" value="CATHELICIDINS_1"/>
    <property type="match status" value="1"/>
</dbReference>
<dbReference type="PROSITE" id="PS00947">
    <property type="entry name" value="CATHELICIDINS_2"/>
    <property type="match status" value="1"/>
</dbReference>
<comment type="function">
    <text>Probably a microbicidal peptide.</text>
</comment>
<comment type="subcellular location">
    <subcellularLocation>
        <location>Secreted</location>
    </subcellularLocation>
</comment>
<comment type="similarity">
    <text evidence="4">Belongs to the cathelicidin family.</text>
</comment>
<comment type="caution">
    <text evidence="5">Was originally (PubMed:2792375) thought to be a thiol protease inhibitor. The inhibitory activity was due to the presence of leukocyte cysteine proteinase inhibitor and not to cathelin itself.</text>
</comment>